<accession>Q5JGR4</accession>
<keyword id="KW-0002">3D-structure</keyword>
<keyword id="KW-1185">Reference proteome</keyword>
<keyword id="KW-0687">Ribonucleoprotein</keyword>
<keyword id="KW-0689">Ribosomal protein</keyword>
<comment type="subunit">
    <text evidence="2">Part of the 30S ribosomal subunit.</text>
</comment>
<comment type="similarity">
    <text evidence="1">Belongs to the eukaryotic ribosomal protein eS28 family.</text>
</comment>
<sequence length="70" mass="7954">MSDEGYPAEVIEIVGRTGVTGGVTQVKVRILEGRDKGRVIRRNVKGPVRVGDIVILRETEREAREIRRRR</sequence>
<dbReference type="EMBL" id="AP006878">
    <property type="protein sequence ID" value="BAD85499.1"/>
    <property type="molecule type" value="Genomic_DNA"/>
</dbReference>
<dbReference type="RefSeq" id="WP_011250261.1">
    <property type="nucleotide sequence ID" value="NC_006624.1"/>
</dbReference>
<dbReference type="PDB" id="6SKF">
    <property type="method" value="EM"/>
    <property type="resolution" value="2.95 A"/>
    <property type="chains" value="Ay=1-70"/>
</dbReference>
<dbReference type="PDB" id="6SKG">
    <property type="method" value="EM"/>
    <property type="resolution" value="2.65 A"/>
    <property type="chains" value="Ay=1-70"/>
</dbReference>
<dbReference type="PDB" id="6TH6">
    <property type="method" value="EM"/>
    <property type="resolution" value="2.55 A"/>
    <property type="chains" value="Ay=1-70"/>
</dbReference>
<dbReference type="PDBsum" id="6SKF"/>
<dbReference type="PDBsum" id="6SKG"/>
<dbReference type="PDBsum" id="6TH6"/>
<dbReference type="EMDB" id="EMD-10223"/>
<dbReference type="EMDB" id="EMD-10224"/>
<dbReference type="EMDB" id="EMD-10503"/>
<dbReference type="SMR" id="Q5JGR4"/>
<dbReference type="FunCoup" id="Q5JGR4">
    <property type="interactions" value="140"/>
</dbReference>
<dbReference type="STRING" id="69014.TK1310"/>
<dbReference type="EnsemblBacteria" id="BAD85499">
    <property type="protein sequence ID" value="BAD85499"/>
    <property type="gene ID" value="TK1310"/>
</dbReference>
<dbReference type="GeneID" id="34862440"/>
<dbReference type="KEGG" id="tko:TK1310"/>
<dbReference type="PATRIC" id="fig|69014.16.peg.1282"/>
<dbReference type="eggNOG" id="arCOG04314">
    <property type="taxonomic scope" value="Archaea"/>
</dbReference>
<dbReference type="HOGENOM" id="CLU_178987_2_1_2"/>
<dbReference type="InParanoid" id="Q5JGR4"/>
<dbReference type="OrthoDB" id="7620at2157"/>
<dbReference type="PhylomeDB" id="Q5JGR4"/>
<dbReference type="Proteomes" id="UP000000536">
    <property type="component" value="Chromosome"/>
</dbReference>
<dbReference type="GO" id="GO:0022627">
    <property type="term" value="C:cytosolic small ribosomal subunit"/>
    <property type="evidence" value="ECO:0000318"/>
    <property type="project" value="GO_Central"/>
</dbReference>
<dbReference type="GO" id="GO:0003735">
    <property type="term" value="F:structural constituent of ribosome"/>
    <property type="evidence" value="ECO:0000318"/>
    <property type="project" value="GO_Central"/>
</dbReference>
<dbReference type="GO" id="GO:0030490">
    <property type="term" value="P:maturation of SSU-rRNA"/>
    <property type="evidence" value="ECO:0000318"/>
    <property type="project" value="GO_Central"/>
</dbReference>
<dbReference type="GO" id="GO:0000028">
    <property type="term" value="P:ribosomal small subunit assembly"/>
    <property type="evidence" value="ECO:0000318"/>
    <property type="project" value="GO_Central"/>
</dbReference>
<dbReference type="GO" id="GO:0006412">
    <property type="term" value="P:translation"/>
    <property type="evidence" value="ECO:0007669"/>
    <property type="project" value="UniProtKB-UniRule"/>
</dbReference>
<dbReference type="FunFam" id="2.40.50.140:FF:000145">
    <property type="entry name" value="30S ribosomal protein S28e"/>
    <property type="match status" value="1"/>
</dbReference>
<dbReference type="Gene3D" id="2.40.50.140">
    <property type="entry name" value="Nucleic acid-binding proteins"/>
    <property type="match status" value="1"/>
</dbReference>
<dbReference type="HAMAP" id="MF_00292">
    <property type="entry name" value="Ribosomal_eS28"/>
    <property type="match status" value="1"/>
</dbReference>
<dbReference type="InterPro" id="IPR012340">
    <property type="entry name" value="NA-bd_OB-fold"/>
</dbReference>
<dbReference type="InterPro" id="IPR000289">
    <property type="entry name" value="Ribosomal_eS28"/>
</dbReference>
<dbReference type="InterPro" id="IPR028626">
    <property type="entry name" value="Ribosomal_eS28_CS"/>
</dbReference>
<dbReference type="NCBIfam" id="NF003080">
    <property type="entry name" value="PRK04007.1"/>
    <property type="match status" value="1"/>
</dbReference>
<dbReference type="PANTHER" id="PTHR10769">
    <property type="entry name" value="40S RIBOSOMAL PROTEIN S28"/>
    <property type="match status" value="1"/>
</dbReference>
<dbReference type="PANTHER" id="PTHR10769:SF3">
    <property type="entry name" value="SMALL RIBOSOMAL SUBUNIT PROTEIN ES28"/>
    <property type="match status" value="1"/>
</dbReference>
<dbReference type="Pfam" id="PF01200">
    <property type="entry name" value="Ribosomal_S28e"/>
    <property type="match status" value="1"/>
</dbReference>
<dbReference type="SUPFAM" id="SSF50249">
    <property type="entry name" value="Nucleic acid-binding proteins"/>
    <property type="match status" value="1"/>
</dbReference>
<dbReference type="PROSITE" id="PS00961">
    <property type="entry name" value="RIBOSOMAL_S28E"/>
    <property type="match status" value="1"/>
</dbReference>
<reference key="1">
    <citation type="journal article" date="2005" name="Genome Res.">
        <title>Complete genome sequence of the hyperthermophilic archaeon Thermococcus kodakaraensis KOD1 and comparison with Pyrococcus genomes.</title>
        <authorList>
            <person name="Fukui T."/>
            <person name="Atomi H."/>
            <person name="Kanai T."/>
            <person name="Matsumi R."/>
            <person name="Fujiwara S."/>
            <person name="Imanaka T."/>
        </authorList>
    </citation>
    <scope>NUCLEOTIDE SEQUENCE [LARGE SCALE GENOMIC DNA]</scope>
    <source>
        <strain>ATCC BAA-918 / JCM 12380 / KOD1</strain>
    </source>
</reference>
<reference evidence="4 5 6" key="2">
    <citation type="journal article" date="2020" name="Nature">
        <title>Dynamic RNA acetylation revealed by quantitative cross-evolutionary mapping.</title>
        <authorList>
            <person name="Sas-Chen A."/>
            <person name="Thomas J.M."/>
            <person name="Matzov D."/>
            <person name="Taoka M."/>
            <person name="Nance K.D."/>
            <person name="Nir R."/>
            <person name="Bryson K.M."/>
            <person name="Shachar R."/>
            <person name="Liman G.L.S."/>
            <person name="Burkhart B.W."/>
            <person name="Gamage S.T."/>
            <person name="Nobe Y."/>
            <person name="Briney C.A."/>
            <person name="Levy M.J."/>
            <person name="Fuchs R.T."/>
            <person name="Robb G.B."/>
            <person name="Hartmann J."/>
            <person name="Sharma S."/>
            <person name="Lin Q."/>
            <person name="Florens L."/>
            <person name="Washburn M.P."/>
            <person name="Isobe T."/>
            <person name="Santangelo T.J."/>
            <person name="Shalev-Benami M."/>
            <person name="Meier J.L."/>
            <person name="Schwartz S."/>
        </authorList>
    </citation>
    <scope>STRUCTURE BY ELECTRON MICROSCOPY (2.55 ANGSTROMS) IN 70S RIBOSOME</scope>
    <scope>SUBUNIT</scope>
    <source>
        <strain>ATCC BAA-918 / TS559</strain>
    </source>
</reference>
<gene>
    <name evidence="1" type="primary">rps28e</name>
    <name type="ordered locus">TK1310</name>
</gene>
<feature type="chain" id="PRO_0000136859" description="Small ribosomal subunit protein eS28">
    <location>
        <begin position="1"/>
        <end position="70"/>
    </location>
</feature>
<proteinExistence type="evidence at protein level"/>
<name>RS28_THEKO</name>
<evidence type="ECO:0000255" key="1">
    <source>
        <dbReference type="HAMAP-Rule" id="MF_00292"/>
    </source>
</evidence>
<evidence type="ECO:0000269" key="2">
    <source>
    </source>
</evidence>
<evidence type="ECO:0000305" key="3"/>
<evidence type="ECO:0007744" key="4">
    <source>
        <dbReference type="PDB" id="6SKF"/>
    </source>
</evidence>
<evidence type="ECO:0007744" key="5">
    <source>
        <dbReference type="PDB" id="6SKG"/>
    </source>
</evidence>
<evidence type="ECO:0007744" key="6">
    <source>
        <dbReference type="PDB" id="6TH6"/>
    </source>
</evidence>
<organism>
    <name type="scientific">Thermococcus kodakarensis (strain ATCC BAA-918 / JCM 12380 / KOD1)</name>
    <name type="common">Pyrococcus kodakaraensis (strain KOD1)</name>
    <dbReference type="NCBI Taxonomy" id="69014"/>
    <lineage>
        <taxon>Archaea</taxon>
        <taxon>Methanobacteriati</taxon>
        <taxon>Methanobacteriota</taxon>
        <taxon>Thermococci</taxon>
        <taxon>Thermococcales</taxon>
        <taxon>Thermococcaceae</taxon>
        <taxon>Thermococcus</taxon>
    </lineage>
</organism>
<protein>
    <recommendedName>
        <fullName evidence="1">Small ribosomal subunit protein eS28</fullName>
    </recommendedName>
    <alternativeName>
        <fullName evidence="3">30S ribosomal protein S28e</fullName>
    </alternativeName>
</protein>